<keyword id="KW-0030">Aminoacyl-tRNA synthetase</keyword>
<keyword id="KW-0067">ATP-binding</keyword>
<keyword id="KW-0963">Cytoplasm</keyword>
<keyword id="KW-0436">Ligase</keyword>
<keyword id="KW-0479">Metal-binding</keyword>
<keyword id="KW-0547">Nucleotide-binding</keyword>
<keyword id="KW-0648">Protein biosynthesis</keyword>
<keyword id="KW-0862">Zinc</keyword>
<feature type="chain" id="PRO_1000001964" description="Glutamate--tRNA ligase">
    <location>
        <begin position="1"/>
        <end position="469"/>
    </location>
</feature>
<feature type="short sequence motif" description="'HIGH' region" evidence="1">
    <location>
        <begin position="9"/>
        <end position="19"/>
    </location>
</feature>
<feature type="short sequence motif" description="'KMSKS' region" evidence="1">
    <location>
        <begin position="236"/>
        <end position="240"/>
    </location>
</feature>
<feature type="binding site" evidence="1">
    <location>
        <position position="98"/>
    </location>
    <ligand>
        <name>Zn(2+)</name>
        <dbReference type="ChEBI" id="CHEBI:29105"/>
    </ligand>
</feature>
<feature type="binding site" evidence="1">
    <location>
        <position position="100"/>
    </location>
    <ligand>
        <name>Zn(2+)</name>
        <dbReference type="ChEBI" id="CHEBI:29105"/>
    </ligand>
</feature>
<feature type="binding site" evidence="1">
    <location>
        <position position="125"/>
    </location>
    <ligand>
        <name>Zn(2+)</name>
        <dbReference type="ChEBI" id="CHEBI:29105"/>
    </ligand>
</feature>
<feature type="binding site" evidence="1">
    <location>
        <position position="127"/>
    </location>
    <ligand>
        <name>Zn(2+)</name>
        <dbReference type="ChEBI" id="CHEBI:29105"/>
    </ligand>
</feature>
<feature type="binding site" evidence="1">
    <location>
        <position position="239"/>
    </location>
    <ligand>
        <name>ATP</name>
        <dbReference type="ChEBI" id="CHEBI:30616"/>
    </ligand>
</feature>
<organism>
    <name type="scientific">Shewanella sp. (strain W3-18-1)</name>
    <dbReference type="NCBI Taxonomy" id="351745"/>
    <lineage>
        <taxon>Bacteria</taxon>
        <taxon>Pseudomonadati</taxon>
        <taxon>Pseudomonadota</taxon>
        <taxon>Gammaproteobacteria</taxon>
        <taxon>Alteromonadales</taxon>
        <taxon>Shewanellaceae</taxon>
        <taxon>Shewanella</taxon>
    </lineage>
</organism>
<comment type="function">
    <text evidence="1">Catalyzes the attachment of glutamate to tRNA(Glu) in a two-step reaction: glutamate is first activated by ATP to form Glu-AMP and then transferred to the acceptor end of tRNA(Glu).</text>
</comment>
<comment type="catalytic activity">
    <reaction evidence="1">
        <text>tRNA(Glu) + L-glutamate + ATP = L-glutamyl-tRNA(Glu) + AMP + diphosphate</text>
        <dbReference type="Rhea" id="RHEA:23540"/>
        <dbReference type="Rhea" id="RHEA-COMP:9663"/>
        <dbReference type="Rhea" id="RHEA-COMP:9680"/>
        <dbReference type="ChEBI" id="CHEBI:29985"/>
        <dbReference type="ChEBI" id="CHEBI:30616"/>
        <dbReference type="ChEBI" id="CHEBI:33019"/>
        <dbReference type="ChEBI" id="CHEBI:78442"/>
        <dbReference type="ChEBI" id="CHEBI:78520"/>
        <dbReference type="ChEBI" id="CHEBI:456215"/>
        <dbReference type="EC" id="6.1.1.17"/>
    </reaction>
</comment>
<comment type="cofactor">
    <cofactor evidence="1">
        <name>Zn(2+)</name>
        <dbReference type="ChEBI" id="CHEBI:29105"/>
    </cofactor>
    <text evidence="1">Binds 1 zinc ion per subunit.</text>
</comment>
<comment type="subunit">
    <text evidence="1">Monomer.</text>
</comment>
<comment type="subcellular location">
    <subcellularLocation>
        <location evidence="1">Cytoplasm</location>
    </subcellularLocation>
</comment>
<comment type="similarity">
    <text evidence="1">Belongs to the class-I aminoacyl-tRNA synthetase family. Glutamate--tRNA ligase type 1 subfamily.</text>
</comment>
<sequence length="469" mass="52671">MTTKTRFAPSPTGFLHVGGARTALYSWLQARANNGEFVLRIEDTDIERSTQAACDAILEGMNWLGLTWDEGPYYQTKRFDRYNEIIAQMLEKGTAYKCYCSRERIDALRESQAANGEAQKYDGCCRDLPARDTDEPFVVRFKNPIGGSVVFDDHVRGRIEFSNDALDDLIIARTDGVPTYNFCVVVDDWDMGITCVVRGEDHINNTPRQINILKALGAPIPEYAHVSMILGDDGAKLSKRHGAVSVMQYRDDGYLPEALLNYLVRLGWSHGDQEVFSLEEMKQYFKLDDINKAPSAFNTDKLVWLNQHYIKTLDPEYVATHLQWHMDDQKIDTSNGPALAEVVTALAERAKTLKELAASSRYFYEDFADFDAEQAKKHLRGVALEPLQLVQQKLAALTEWTVEAIHQAIEQTATELDVGMGKVGMPLRVSVTGAGQSPGLDITLFLIGRSRSEQRISKAIEFVADRINS</sequence>
<reference key="1">
    <citation type="submission" date="2006-12" db="EMBL/GenBank/DDBJ databases">
        <title>Complete sequence of Shewanella sp. W3-18-1.</title>
        <authorList>
            <consortium name="US DOE Joint Genome Institute"/>
            <person name="Copeland A."/>
            <person name="Lucas S."/>
            <person name="Lapidus A."/>
            <person name="Barry K."/>
            <person name="Detter J.C."/>
            <person name="Glavina del Rio T."/>
            <person name="Hammon N."/>
            <person name="Israni S."/>
            <person name="Dalin E."/>
            <person name="Tice H."/>
            <person name="Pitluck S."/>
            <person name="Chain P."/>
            <person name="Malfatti S."/>
            <person name="Shin M."/>
            <person name="Vergez L."/>
            <person name="Schmutz J."/>
            <person name="Larimer F."/>
            <person name="Land M."/>
            <person name="Hauser L."/>
            <person name="Kyrpides N."/>
            <person name="Lykidis A."/>
            <person name="Tiedje J."/>
            <person name="Richardson P."/>
        </authorList>
    </citation>
    <scope>NUCLEOTIDE SEQUENCE [LARGE SCALE GENOMIC DNA]</scope>
    <source>
        <strain>W3-18-1</strain>
    </source>
</reference>
<evidence type="ECO:0000255" key="1">
    <source>
        <dbReference type="HAMAP-Rule" id="MF_00022"/>
    </source>
</evidence>
<dbReference type="EC" id="6.1.1.17" evidence="1"/>
<dbReference type="EMBL" id="CP000503">
    <property type="protein sequence ID" value="ABM24347.1"/>
    <property type="molecule type" value="Genomic_DNA"/>
</dbReference>
<dbReference type="RefSeq" id="WP_011788848.1">
    <property type="nucleotide sequence ID" value="NC_008750.1"/>
</dbReference>
<dbReference type="SMR" id="A1RI52"/>
<dbReference type="KEGG" id="shw:Sputw3181_1509"/>
<dbReference type="HOGENOM" id="CLU_015768_6_3_6"/>
<dbReference type="Proteomes" id="UP000002597">
    <property type="component" value="Chromosome"/>
</dbReference>
<dbReference type="GO" id="GO:0005829">
    <property type="term" value="C:cytosol"/>
    <property type="evidence" value="ECO:0007669"/>
    <property type="project" value="TreeGrafter"/>
</dbReference>
<dbReference type="GO" id="GO:0005524">
    <property type="term" value="F:ATP binding"/>
    <property type="evidence" value="ECO:0007669"/>
    <property type="project" value="UniProtKB-UniRule"/>
</dbReference>
<dbReference type="GO" id="GO:0004818">
    <property type="term" value="F:glutamate-tRNA ligase activity"/>
    <property type="evidence" value="ECO:0007669"/>
    <property type="project" value="UniProtKB-UniRule"/>
</dbReference>
<dbReference type="GO" id="GO:0000049">
    <property type="term" value="F:tRNA binding"/>
    <property type="evidence" value="ECO:0007669"/>
    <property type="project" value="InterPro"/>
</dbReference>
<dbReference type="GO" id="GO:0008270">
    <property type="term" value="F:zinc ion binding"/>
    <property type="evidence" value="ECO:0007669"/>
    <property type="project" value="UniProtKB-UniRule"/>
</dbReference>
<dbReference type="GO" id="GO:0006424">
    <property type="term" value="P:glutamyl-tRNA aminoacylation"/>
    <property type="evidence" value="ECO:0007669"/>
    <property type="project" value="UniProtKB-UniRule"/>
</dbReference>
<dbReference type="CDD" id="cd00808">
    <property type="entry name" value="GluRS_core"/>
    <property type="match status" value="1"/>
</dbReference>
<dbReference type="FunFam" id="1.10.10.350:FF:000001">
    <property type="entry name" value="Glutamate--tRNA ligase"/>
    <property type="match status" value="1"/>
</dbReference>
<dbReference type="FunFam" id="3.40.50.620:FF:000007">
    <property type="entry name" value="Glutamate--tRNA ligase"/>
    <property type="match status" value="1"/>
</dbReference>
<dbReference type="Gene3D" id="1.10.10.350">
    <property type="match status" value="1"/>
</dbReference>
<dbReference type="Gene3D" id="3.40.50.620">
    <property type="entry name" value="HUPs"/>
    <property type="match status" value="1"/>
</dbReference>
<dbReference type="HAMAP" id="MF_00022">
    <property type="entry name" value="Glu_tRNA_synth_type1"/>
    <property type="match status" value="1"/>
</dbReference>
<dbReference type="InterPro" id="IPR045462">
    <property type="entry name" value="aa-tRNA-synth_I_cd-bd"/>
</dbReference>
<dbReference type="InterPro" id="IPR020751">
    <property type="entry name" value="aa-tRNA-synth_I_codon-bd_sub2"/>
</dbReference>
<dbReference type="InterPro" id="IPR001412">
    <property type="entry name" value="aa-tRNA-synth_I_CS"/>
</dbReference>
<dbReference type="InterPro" id="IPR008925">
    <property type="entry name" value="aa_tRNA-synth_I_cd-bd_sf"/>
</dbReference>
<dbReference type="InterPro" id="IPR004527">
    <property type="entry name" value="Glu-tRNA-ligase_bac/mito"/>
</dbReference>
<dbReference type="InterPro" id="IPR000924">
    <property type="entry name" value="Glu/Gln-tRNA-synth"/>
</dbReference>
<dbReference type="InterPro" id="IPR020058">
    <property type="entry name" value="Glu/Gln-tRNA-synth_Ib_cat-dom"/>
</dbReference>
<dbReference type="InterPro" id="IPR049940">
    <property type="entry name" value="GluQ/Sye"/>
</dbReference>
<dbReference type="InterPro" id="IPR033910">
    <property type="entry name" value="GluRS_core"/>
</dbReference>
<dbReference type="InterPro" id="IPR014729">
    <property type="entry name" value="Rossmann-like_a/b/a_fold"/>
</dbReference>
<dbReference type="NCBIfam" id="TIGR00464">
    <property type="entry name" value="gltX_bact"/>
    <property type="match status" value="1"/>
</dbReference>
<dbReference type="PANTHER" id="PTHR43311">
    <property type="entry name" value="GLUTAMATE--TRNA LIGASE"/>
    <property type="match status" value="1"/>
</dbReference>
<dbReference type="PANTHER" id="PTHR43311:SF2">
    <property type="entry name" value="GLUTAMATE--TRNA LIGASE, MITOCHONDRIAL-RELATED"/>
    <property type="match status" value="1"/>
</dbReference>
<dbReference type="Pfam" id="PF19269">
    <property type="entry name" value="Anticodon_2"/>
    <property type="match status" value="1"/>
</dbReference>
<dbReference type="Pfam" id="PF00749">
    <property type="entry name" value="tRNA-synt_1c"/>
    <property type="match status" value="1"/>
</dbReference>
<dbReference type="PRINTS" id="PR00987">
    <property type="entry name" value="TRNASYNTHGLU"/>
</dbReference>
<dbReference type="SUPFAM" id="SSF48163">
    <property type="entry name" value="An anticodon-binding domain of class I aminoacyl-tRNA synthetases"/>
    <property type="match status" value="1"/>
</dbReference>
<dbReference type="SUPFAM" id="SSF52374">
    <property type="entry name" value="Nucleotidylyl transferase"/>
    <property type="match status" value="1"/>
</dbReference>
<dbReference type="PROSITE" id="PS00178">
    <property type="entry name" value="AA_TRNA_LIGASE_I"/>
    <property type="match status" value="1"/>
</dbReference>
<gene>
    <name evidence="1" type="primary">gltX</name>
    <name type="ordered locus">Sputw3181_1509</name>
</gene>
<proteinExistence type="inferred from homology"/>
<name>SYE_SHESW</name>
<accession>A1RI52</accession>
<protein>
    <recommendedName>
        <fullName evidence="1">Glutamate--tRNA ligase</fullName>
        <ecNumber evidence="1">6.1.1.17</ecNumber>
    </recommendedName>
    <alternativeName>
        <fullName evidence="1">Glutamyl-tRNA synthetase</fullName>
        <shortName evidence="1">GluRS</shortName>
    </alternativeName>
</protein>